<reference key="1">
    <citation type="submission" date="2008-10" db="EMBL/GenBank/DDBJ databases">
        <title>Genome sequence of Clostridium botulinum A2 Kyoto.</title>
        <authorList>
            <person name="Shrivastava S."/>
            <person name="Brinkac L.M."/>
            <person name="Brown J.L."/>
            <person name="Bruce D."/>
            <person name="Detter C.C."/>
            <person name="Johnson E.A."/>
            <person name="Munk C.A."/>
            <person name="Smith L.A."/>
            <person name="Smith T.J."/>
            <person name="Sutton G."/>
            <person name="Brettin T.S."/>
        </authorList>
    </citation>
    <scope>NUCLEOTIDE SEQUENCE [LARGE SCALE GENOMIC DNA]</scope>
    <source>
        <strain>Kyoto / Type A2</strain>
    </source>
</reference>
<evidence type="ECO:0000255" key="1">
    <source>
        <dbReference type="HAMAP-Rule" id="MF_00501"/>
    </source>
</evidence>
<evidence type="ECO:0000305" key="2"/>
<protein>
    <recommendedName>
        <fullName evidence="1">Large ribosomal subunit protein bL31</fullName>
    </recommendedName>
    <alternativeName>
        <fullName evidence="2">50S ribosomal protein L31</fullName>
    </alternativeName>
</protein>
<name>RL31_CLOBJ</name>
<feature type="chain" id="PRO_1000176955" description="Large ribosomal subunit protein bL31">
    <location>
        <begin position="1"/>
        <end position="72"/>
    </location>
</feature>
<feature type="binding site" evidence="1">
    <location>
        <position position="17"/>
    </location>
    <ligand>
        <name>Zn(2+)</name>
        <dbReference type="ChEBI" id="CHEBI:29105"/>
    </ligand>
</feature>
<feature type="binding site" evidence="1">
    <location>
        <position position="19"/>
    </location>
    <ligand>
        <name>Zn(2+)</name>
        <dbReference type="ChEBI" id="CHEBI:29105"/>
    </ligand>
</feature>
<feature type="binding site" evidence="1">
    <location>
        <position position="37"/>
    </location>
    <ligand>
        <name>Zn(2+)</name>
        <dbReference type="ChEBI" id="CHEBI:29105"/>
    </ligand>
</feature>
<feature type="binding site" evidence="1">
    <location>
        <position position="40"/>
    </location>
    <ligand>
        <name>Zn(2+)</name>
        <dbReference type="ChEBI" id="CHEBI:29105"/>
    </ligand>
</feature>
<gene>
    <name evidence="1" type="primary">rpmE</name>
    <name type="ordered locus">CLM_0178</name>
</gene>
<proteinExistence type="inferred from homology"/>
<organism>
    <name type="scientific">Clostridium botulinum (strain Kyoto / Type A2)</name>
    <dbReference type="NCBI Taxonomy" id="536232"/>
    <lineage>
        <taxon>Bacteria</taxon>
        <taxon>Bacillati</taxon>
        <taxon>Bacillota</taxon>
        <taxon>Clostridia</taxon>
        <taxon>Eubacteriales</taxon>
        <taxon>Clostridiaceae</taxon>
        <taxon>Clostridium</taxon>
    </lineage>
</organism>
<sequence>MREGIHPEYNHDVVVKCACGNTFTTGSTNKELKVEICSKCHPFFTGKQKIVDAGGRVDKFMKKFNLSNEDVK</sequence>
<keyword id="KW-0479">Metal-binding</keyword>
<keyword id="KW-0687">Ribonucleoprotein</keyword>
<keyword id="KW-0689">Ribosomal protein</keyword>
<keyword id="KW-0694">RNA-binding</keyword>
<keyword id="KW-0699">rRNA-binding</keyword>
<keyword id="KW-0862">Zinc</keyword>
<comment type="function">
    <text evidence="1">Binds the 23S rRNA.</text>
</comment>
<comment type="cofactor">
    <cofactor evidence="1">
        <name>Zn(2+)</name>
        <dbReference type="ChEBI" id="CHEBI:29105"/>
    </cofactor>
    <text evidence="1">Binds 1 zinc ion per subunit.</text>
</comment>
<comment type="subunit">
    <text evidence="1">Part of the 50S ribosomal subunit.</text>
</comment>
<comment type="similarity">
    <text evidence="1">Belongs to the bacterial ribosomal protein bL31 family. Type A subfamily.</text>
</comment>
<dbReference type="EMBL" id="CP001581">
    <property type="protein sequence ID" value="ACO84599.1"/>
    <property type="molecule type" value="Genomic_DNA"/>
</dbReference>
<dbReference type="RefSeq" id="WP_003355803.1">
    <property type="nucleotide sequence ID" value="NC_012563.1"/>
</dbReference>
<dbReference type="GeneID" id="5184390"/>
<dbReference type="KEGG" id="cby:CLM_0178"/>
<dbReference type="eggNOG" id="COG0254">
    <property type="taxonomic scope" value="Bacteria"/>
</dbReference>
<dbReference type="HOGENOM" id="CLU_114306_4_3_9"/>
<dbReference type="Proteomes" id="UP000001374">
    <property type="component" value="Chromosome"/>
</dbReference>
<dbReference type="GO" id="GO:1990904">
    <property type="term" value="C:ribonucleoprotein complex"/>
    <property type="evidence" value="ECO:0007669"/>
    <property type="project" value="UniProtKB-KW"/>
</dbReference>
<dbReference type="GO" id="GO:0005840">
    <property type="term" value="C:ribosome"/>
    <property type="evidence" value="ECO:0007669"/>
    <property type="project" value="UniProtKB-KW"/>
</dbReference>
<dbReference type="GO" id="GO:0046872">
    <property type="term" value="F:metal ion binding"/>
    <property type="evidence" value="ECO:0007669"/>
    <property type="project" value="UniProtKB-KW"/>
</dbReference>
<dbReference type="GO" id="GO:0019843">
    <property type="term" value="F:rRNA binding"/>
    <property type="evidence" value="ECO:0007669"/>
    <property type="project" value="UniProtKB-KW"/>
</dbReference>
<dbReference type="GO" id="GO:0003735">
    <property type="term" value="F:structural constituent of ribosome"/>
    <property type="evidence" value="ECO:0007669"/>
    <property type="project" value="InterPro"/>
</dbReference>
<dbReference type="GO" id="GO:0006412">
    <property type="term" value="P:translation"/>
    <property type="evidence" value="ECO:0007669"/>
    <property type="project" value="UniProtKB-UniRule"/>
</dbReference>
<dbReference type="Gene3D" id="4.10.830.30">
    <property type="entry name" value="Ribosomal protein L31"/>
    <property type="match status" value="1"/>
</dbReference>
<dbReference type="HAMAP" id="MF_00501">
    <property type="entry name" value="Ribosomal_bL31_1"/>
    <property type="match status" value="1"/>
</dbReference>
<dbReference type="InterPro" id="IPR034704">
    <property type="entry name" value="Ribosomal_bL28/bL31-like_sf"/>
</dbReference>
<dbReference type="InterPro" id="IPR002150">
    <property type="entry name" value="Ribosomal_bL31"/>
</dbReference>
<dbReference type="InterPro" id="IPR027491">
    <property type="entry name" value="Ribosomal_bL31_A"/>
</dbReference>
<dbReference type="InterPro" id="IPR042105">
    <property type="entry name" value="Ribosomal_bL31_sf"/>
</dbReference>
<dbReference type="NCBIfam" id="TIGR00105">
    <property type="entry name" value="L31"/>
    <property type="match status" value="1"/>
</dbReference>
<dbReference type="NCBIfam" id="NF000612">
    <property type="entry name" value="PRK00019.1"/>
    <property type="match status" value="1"/>
</dbReference>
<dbReference type="NCBIfam" id="NF001809">
    <property type="entry name" value="PRK00528.1"/>
    <property type="match status" value="1"/>
</dbReference>
<dbReference type="PANTHER" id="PTHR33280">
    <property type="entry name" value="50S RIBOSOMAL PROTEIN L31, CHLOROPLASTIC"/>
    <property type="match status" value="1"/>
</dbReference>
<dbReference type="PANTHER" id="PTHR33280:SF1">
    <property type="entry name" value="LARGE RIBOSOMAL SUBUNIT PROTEIN BL31C"/>
    <property type="match status" value="1"/>
</dbReference>
<dbReference type="Pfam" id="PF01197">
    <property type="entry name" value="Ribosomal_L31"/>
    <property type="match status" value="1"/>
</dbReference>
<dbReference type="PRINTS" id="PR01249">
    <property type="entry name" value="RIBOSOMALL31"/>
</dbReference>
<dbReference type="SUPFAM" id="SSF143800">
    <property type="entry name" value="L28p-like"/>
    <property type="match status" value="1"/>
</dbReference>
<dbReference type="PROSITE" id="PS01143">
    <property type="entry name" value="RIBOSOMAL_L31"/>
    <property type="match status" value="1"/>
</dbReference>
<accession>C1FQ93</accession>